<accession>Q4ZTG0</accession>
<gene>
    <name evidence="1" type="primary">dnaE2</name>
    <name type="ordered locus">Psyr_2523</name>
</gene>
<dbReference type="EC" id="2.7.7.7" evidence="1"/>
<dbReference type="EMBL" id="CP000075">
    <property type="protein sequence ID" value="AAY37562.1"/>
    <property type="molecule type" value="Genomic_DNA"/>
</dbReference>
<dbReference type="RefSeq" id="WP_011267744.1">
    <property type="nucleotide sequence ID" value="NC_007005.1"/>
</dbReference>
<dbReference type="RefSeq" id="YP_235600.1">
    <property type="nucleotide sequence ID" value="NC_007005.1"/>
</dbReference>
<dbReference type="SMR" id="Q4ZTG0"/>
<dbReference type="STRING" id="205918.Psyr_2523"/>
<dbReference type="KEGG" id="psb:Psyr_2523"/>
<dbReference type="PATRIC" id="fig|205918.7.peg.2584"/>
<dbReference type="eggNOG" id="COG0587">
    <property type="taxonomic scope" value="Bacteria"/>
</dbReference>
<dbReference type="HOGENOM" id="CLU_001600_4_0_6"/>
<dbReference type="OrthoDB" id="9803237at2"/>
<dbReference type="Proteomes" id="UP000000426">
    <property type="component" value="Chromosome"/>
</dbReference>
<dbReference type="GO" id="GO:0005737">
    <property type="term" value="C:cytoplasm"/>
    <property type="evidence" value="ECO:0007669"/>
    <property type="project" value="UniProtKB-SubCell"/>
</dbReference>
<dbReference type="GO" id="GO:0008408">
    <property type="term" value="F:3'-5' exonuclease activity"/>
    <property type="evidence" value="ECO:0007669"/>
    <property type="project" value="InterPro"/>
</dbReference>
<dbReference type="GO" id="GO:0003887">
    <property type="term" value="F:DNA-directed DNA polymerase activity"/>
    <property type="evidence" value="ECO:0007669"/>
    <property type="project" value="UniProtKB-UniRule"/>
</dbReference>
<dbReference type="GO" id="GO:0003676">
    <property type="term" value="F:nucleic acid binding"/>
    <property type="evidence" value="ECO:0007669"/>
    <property type="project" value="InterPro"/>
</dbReference>
<dbReference type="GO" id="GO:0006281">
    <property type="term" value="P:DNA repair"/>
    <property type="evidence" value="ECO:0007669"/>
    <property type="project" value="UniProtKB-UniRule"/>
</dbReference>
<dbReference type="GO" id="GO:0006260">
    <property type="term" value="P:DNA replication"/>
    <property type="evidence" value="ECO:0007669"/>
    <property type="project" value="UniProtKB-KW"/>
</dbReference>
<dbReference type="CDD" id="cd04485">
    <property type="entry name" value="DnaE_OBF"/>
    <property type="match status" value="1"/>
</dbReference>
<dbReference type="CDD" id="cd07434">
    <property type="entry name" value="PHP_PolIIIA_DnaE2"/>
    <property type="match status" value="1"/>
</dbReference>
<dbReference type="FunFam" id="1.10.150.870:FF:000002">
    <property type="entry name" value="Error-prone DNA polymerase"/>
    <property type="match status" value="1"/>
</dbReference>
<dbReference type="Gene3D" id="1.10.150.870">
    <property type="match status" value="1"/>
</dbReference>
<dbReference type="Gene3D" id="3.20.20.140">
    <property type="entry name" value="Metal-dependent hydrolases"/>
    <property type="match status" value="1"/>
</dbReference>
<dbReference type="HAMAP" id="MF_01902">
    <property type="entry name" value="DNApol_error_prone"/>
    <property type="match status" value="1"/>
</dbReference>
<dbReference type="InterPro" id="IPR011708">
    <property type="entry name" value="DNA_pol3_alpha_NTPase_dom"/>
</dbReference>
<dbReference type="InterPro" id="IPR040982">
    <property type="entry name" value="DNA_pol3_finger"/>
</dbReference>
<dbReference type="InterPro" id="IPR023073">
    <property type="entry name" value="DnaE2"/>
</dbReference>
<dbReference type="InterPro" id="IPR004805">
    <property type="entry name" value="DnaE2/DnaE/PolC"/>
</dbReference>
<dbReference type="InterPro" id="IPR029460">
    <property type="entry name" value="DNAPol_HHH"/>
</dbReference>
<dbReference type="InterPro" id="IPR004365">
    <property type="entry name" value="NA-bd_OB_tRNA"/>
</dbReference>
<dbReference type="InterPro" id="IPR004013">
    <property type="entry name" value="PHP_dom"/>
</dbReference>
<dbReference type="InterPro" id="IPR003141">
    <property type="entry name" value="Pol/His_phosphatase_N"/>
</dbReference>
<dbReference type="InterPro" id="IPR016195">
    <property type="entry name" value="Pol/histidinol_Pase-like"/>
</dbReference>
<dbReference type="NCBIfam" id="TIGR00594">
    <property type="entry name" value="polc"/>
    <property type="match status" value="1"/>
</dbReference>
<dbReference type="NCBIfam" id="NF004225">
    <property type="entry name" value="PRK05672.1"/>
    <property type="match status" value="1"/>
</dbReference>
<dbReference type="PANTHER" id="PTHR32294">
    <property type="entry name" value="DNA POLYMERASE III SUBUNIT ALPHA"/>
    <property type="match status" value="1"/>
</dbReference>
<dbReference type="PANTHER" id="PTHR32294:SF4">
    <property type="entry name" value="ERROR-PRONE DNA POLYMERASE"/>
    <property type="match status" value="1"/>
</dbReference>
<dbReference type="Pfam" id="PF07733">
    <property type="entry name" value="DNA_pol3_alpha"/>
    <property type="match status" value="1"/>
</dbReference>
<dbReference type="Pfam" id="PF17657">
    <property type="entry name" value="DNA_pol3_finger"/>
    <property type="match status" value="1"/>
</dbReference>
<dbReference type="Pfam" id="PF14579">
    <property type="entry name" value="HHH_6"/>
    <property type="match status" value="1"/>
</dbReference>
<dbReference type="Pfam" id="PF02811">
    <property type="entry name" value="PHP"/>
    <property type="match status" value="1"/>
</dbReference>
<dbReference type="Pfam" id="PF01336">
    <property type="entry name" value="tRNA_anti-codon"/>
    <property type="match status" value="1"/>
</dbReference>
<dbReference type="SMART" id="SM00481">
    <property type="entry name" value="POLIIIAc"/>
    <property type="match status" value="1"/>
</dbReference>
<dbReference type="SUPFAM" id="SSF89550">
    <property type="entry name" value="PHP domain-like"/>
    <property type="match status" value="1"/>
</dbReference>
<proteinExistence type="inferred from homology"/>
<evidence type="ECO:0000255" key="1">
    <source>
        <dbReference type="HAMAP-Rule" id="MF_01902"/>
    </source>
</evidence>
<organism>
    <name type="scientific">Pseudomonas syringae pv. syringae (strain B728a)</name>
    <dbReference type="NCBI Taxonomy" id="205918"/>
    <lineage>
        <taxon>Bacteria</taxon>
        <taxon>Pseudomonadati</taxon>
        <taxon>Pseudomonadota</taxon>
        <taxon>Gammaproteobacteria</taxon>
        <taxon>Pseudomonadales</taxon>
        <taxon>Pseudomonadaceae</taxon>
        <taxon>Pseudomonas</taxon>
        <taxon>Pseudomonas syringae</taxon>
    </lineage>
</organism>
<comment type="function">
    <text evidence="1">DNA polymerase involved in damage-induced mutagenesis and translesion synthesis (TLS). It is not the major replicative DNA polymerase.</text>
</comment>
<comment type="catalytic activity">
    <reaction evidence="1">
        <text>DNA(n) + a 2'-deoxyribonucleoside 5'-triphosphate = DNA(n+1) + diphosphate</text>
        <dbReference type="Rhea" id="RHEA:22508"/>
        <dbReference type="Rhea" id="RHEA-COMP:17339"/>
        <dbReference type="Rhea" id="RHEA-COMP:17340"/>
        <dbReference type="ChEBI" id="CHEBI:33019"/>
        <dbReference type="ChEBI" id="CHEBI:61560"/>
        <dbReference type="ChEBI" id="CHEBI:173112"/>
        <dbReference type="EC" id="2.7.7.7"/>
    </reaction>
</comment>
<comment type="subcellular location">
    <subcellularLocation>
        <location evidence="1">Cytoplasm</location>
    </subcellularLocation>
</comment>
<comment type="similarity">
    <text evidence="1">Belongs to the DNA polymerase type-C family. DnaE2 subfamily.</text>
</comment>
<protein>
    <recommendedName>
        <fullName evidence="1">Error-prone DNA polymerase</fullName>
        <ecNumber evidence="1">2.7.7.7</ecNumber>
    </recommendedName>
</protein>
<reference key="1">
    <citation type="journal article" date="2005" name="Proc. Natl. Acad. Sci. U.S.A.">
        <title>Comparison of the complete genome sequences of Pseudomonas syringae pv. syringae B728a and pv. tomato DC3000.</title>
        <authorList>
            <person name="Feil H."/>
            <person name="Feil W.S."/>
            <person name="Chain P."/>
            <person name="Larimer F."/>
            <person name="Dibartolo G."/>
            <person name="Copeland A."/>
            <person name="Lykidis A."/>
            <person name="Trong S."/>
            <person name="Nolan M."/>
            <person name="Goltsman E."/>
            <person name="Thiel J."/>
            <person name="Malfatti S."/>
            <person name="Loper J.E."/>
            <person name="Lapidus A."/>
            <person name="Detter J.C."/>
            <person name="Land M."/>
            <person name="Richardson P.M."/>
            <person name="Kyrpides N.C."/>
            <person name="Ivanova N."/>
            <person name="Lindow S.E."/>
        </authorList>
    </citation>
    <scope>NUCLEOTIDE SEQUENCE [LARGE SCALE GENOMIC DNA]</scope>
    <source>
        <strain>B728a</strain>
    </source>
</reference>
<feature type="chain" id="PRO_0000103391" description="Error-prone DNA polymerase">
    <location>
        <begin position="1"/>
        <end position="1031"/>
    </location>
</feature>
<name>DNAE2_PSEU2</name>
<sequence>MTREYAELHCLSNFSFQRGASSARELFERALRHGYKALAITDECTLAGIVRAWQASKSTGLPLIVGSEMHIENGPKVVLLVENQAGYEALCKLITVARRRAGKGEYRVLREDFEPAPDGLLALWLPDLDGNAQACLAGGRWLRERFAERLWLGVGLHRGPDDEQRLADLLALAQSLGVPAVASGDVHMHARGRRALQDTMTAIRHHTTVAEAGHLLFANGERHLRPLDALSEHYPDWLLAESVRIARRCTFDLGDLKYEYPHELVPKGQTSTSWLRELTERGVRRRWPGGLTPATRAQVEKELALIAEKKFDSYFLTVHDIVEFARSQHILCQGRGSAANSAVCYALGITELNPEQSNLLFERFISRERNEPPDIDVDFEHDRREEVIQYIFRRYGRGRAALTAVASTYHGSGAMRDVAKVLGLPPEQINALAEAFSRWSDSLPSPERLREYGFDADTPILKRVLALTGELIGFPRHLSQHPGGFVISEHPLETLVPVENAAMADRTIIQWDKDDLDLVGLLKVDILALGMLSALRRTFDLVHLHRGQRWTLATLPGDDRKTYEMISRADTIGVFQIESRAQMAMLPRLRPEKFYDLVIEVAIVRPGPIQGDMVHPYLRRRNGEEDVTYPPKLESVFKRTLGVPLFQEQVMEVAILAADYTPGEADELRRAMAAWKRHGGLEPHRERLRTGMLKNGYEADFADRIFEQIKGFGSYGFPESHAASFALLTYASCWLKCHEPAAFTCALINSWPMGFYSPDQLLQDARRHHIEIRPVDVRYSDWDCSLEPLDHPDRTRNLAIRLGLRMVRSFREEDALRIEVARAKRPFVDATDLTLRAELDARAAEALADSGALRGLIGHRHRARWEVAGVEAQRPLFDDLPSEETQVTLPLPTVAEDLVADYTTLGTTLGPHPLALLRRQLAAKRFRSSQDLLHLENDRTLSVAGLVIGRQRPGTASGVTFVTLEDEFGMVNVVVWRDLAERQRKVLVGSQLLQVFGRLESKSGVRHLIAQRLYDLTPLLTGLDVRSRDFQ</sequence>
<keyword id="KW-0963">Cytoplasm</keyword>
<keyword id="KW-0227">DNA damage</keyword>
<keyword id="KW-0234">DNA repair</keyword>
<keyword id="KW-0235">DNA replication</keyword>
<keyword id="KW-0239">DNA-directed DNA polymerase</keyword>
<keyword id="KW-0548">Nucleotidyltransferase</keyword>
<keyword id="KW-0808">Transferase</keyword>